<reference key="1">
    <citation type="journal article" date="1992" name="J. Biol. Chem.">
        <title>The yeast SEC17 gene product is functionally equivalent to mammalian alpha-SNAP protein.</title>
        <authorList>
            <person name="Griff I.C."/>
            <person name="Schekman R."/>
            <person name="Rothman J.E."/>
            <person name="Kaiser C.A."/>
        </authorList>
    </citation>
    <scope>NUCLEOTIDE SEQUENCE [GENOMIC DNA]</scope>
</reference>
<reference key="2">
    <citation type="journal article" date="1993" name="Yeast">
        <title>Sequencing and functional analysis of a 32,560 bp segment on the left arm of yeast chromosome II. Identification of 26 open reading frames, including the KIP1 and SEC17 genes.</title>
        <authorList>
            <person name="Scherens B."/>
            <person name="el Bakkoury M."/>
            <person name="Vierendeels F."/>
            <person name="Dubois E."/>
            <person name="Messenguy F."/>
        </authorList>
    </citation>
    <scope>NUCLEOTIDE SEQUENCE [GENOMIC DNA]</scope>
    <source>
        <strain>ATCC 204508 / S288c</strain>
    </source>
</reference>
<reference key="3">
    <citation type="journal article" date="1994" name="EMBO J.">
        <title>Complete DNA sequence of yeast chromosome II.</title>
        <authorList>
            <person name="Feldmann H."/>
            <person name="Aigle M."/>
            <person name="Aljinovic G."/>
            <person name="Andre B."/>
            <person name="Baclet M.C."/>
            <person name="Barthe C."/>
            <person name="Baur A."/>
            <person name="Becam A.-M."/>
            <person name="Biteau N."/>
            <person name="Boles E."/>
            <person name="Brandt T."/>
            <person name="Brendel M."/>
            <person name="Brueckner M."/>
            <person name="Bussereau F."/>
            <person name="Christiansen C."/>
            <person name="Contreras R."/>
            <person name="Crouzet M."/>
            <person name="Cziepluch C."/>
            <person name="Demolis N."/>
            <person name="Delaveau T."/>
            <person name="Doignon F."/>
            <person name="Domdey H."/>
            <person name="Duesterhus S."/>
            <person name="Dubois E."/>
            <person name="Dujon B."/>
            <person name="El Bakkoury M."/>
            <person name="Entian K.-D."/>
            <person name="Feuermann M."/>
            <person name="Fiers W."/>
            <person name="Fobo G.M."/>
            <person name="Fritz C."/>
            <person name="Gassenhuber J."/>
            <person name="Glansdorff N."/>
            <person name="Goffeau A."/>
            <person name="Grivell L.A."/>
            <person name="de Haan M."/>
            <person name="Hein C."/>
            <person name="Herbert C.J."/>
            <person name="Hollenberg C.P."/>
            <person name="Holmstroem K."/>
            <person name="Jacq C."/>
            <person name="Jacquet M."/>
            <person name="Jauniaux J.-C."/>
            <person name="Jonniaux J.-L."/>
            <person name="Kallesoee T."/>
            <person name="Kiesau P."/>
            <person name="Kirchrath L."/>
            <person name="Koetter P."/>
            <person name="Korol S."/>
            <person name="Liebl S."/>
            <person name="Logghe M."/>
            <person name="Lohan A.J.E."/>
            <person name="Louis E.J."/>
            <person name="Li Z.Y."/>
            <person name="Maat M.J."/>
            <person name="Mallet L."/>
            <person name="Mannhaupt G."/>
            <person name="Messenguy F."/>
            <person name="Miosga T."/>
            <person name="Molemans F."/>
            <person name="Mueller S."/>
            <person name="Nasr F."/>
            <person name="Obermaier B."/>
            <person name="Perea J."/>
            <person name="Pierard A."/>
            <person name="Piravandi E."/>
            <person name="Pohl F.M."/>
            <person name="Pohl T.M."/>
            <person name="Potier S."/>
            <person name="Proft M."/>
            <person name="Purnelle B."/>
            <person name="Ramezani Rad M."/>
            <person name="Rieger M."/>
            <person name="Rose M."/>
            <person name="Schaaff-Gerstenschlaeger I."/>
            <person name="Scherens B."/>
            <person name="Schwarzlose C."/>
            <person name="Skala J."/>
            <person name="Slonimski P.P."/>
            <person name="Smits P.H.M."/>
            <person name="Souciet J.-L."/>
            <person name="Steensma H.Y."/>
            <person name="Stucka R."/>
            <person name="Urrestarazu L.A."/>
            <person name="van der Aart Q.J.M."/>
            <person name="Van Dyck L."/>
            <person name="Vassarotti A."/>
            <person name="Vetter I."/>
            <person name="Vierendeels F."/>
            <person name="Vissers S."/>
            <person name="Wagner G."/>
            <person name="de Wergifosse P."/>
            <person name="Wolfe K.H."/>
            <person name="Zagulski M."/>
            <person name="Zimmermann F.K."/>
            <person name="Mewes H.-W."/>
            <person name="Kleine K."/>
        </authorList>
    </citation>
    <scope>NUCLEOTIDE SEQUENCE [LARGE SCALE GENOMIC DNA]</scope>
    <source>
        <strain>ATCC 204508 / S288c</strain>
    </source>
</reference>
<reference key="4">
    <citation type="journal article" date="2014" name="G3 (Bethesda)">
        <title>The reference genome sequence of Saccharomyces cerevisiae: Then and now.</title>
        <authorList>
            <person name="Engel S.R."/>
            <person name="Dietrich F.S."/>
            <person name="Fisk D.G."/>
            <person name="Binkley G."/>
            <person name="Balakrishnan R."/>
            <person name="Costanzo M.C."/>
            <person name="Dwight S.S."/>
            <person name="Hitz B.C."/>
            <person name="Karra K."/>
            <person name="Nash R.S."/>
            <person name="Weng S."/>
            <person name="Wong E.D."/>
            <person name="Lloyd P."/>
            <person name="Skrzypek M.S."/>
            <person name="Miyasato S.R."/>
            <person name="Simison M."/>
            <person name="Cherry J.M."/>
        </authorList>
    </citation>
    <scope>GENOME REANNOTATION</scope>
    <source>
        <strain>ATCC 204508 / S288c</strain>
    </source>
</reference>
<reference key="5">
    <citation type="submission" date="2005-05" db="UniProtKB">
        <authorList>
            <person name="Bienvenut W.V."/>
            <person name="Peters C."/>
        </authorList>
    </citation>
    <scope>PROTEIN SEQUENCE OF 2-10; 52-62; 89-110 AND 121-136</scope>
    <scope>CLEAVAGE OF INITIATOR METHIONINE</scope>
    <scope>ACETYLATION AT SER-2</scope>
    <scope>IDENTIFICATION BY MASS SPECTROMETRY</scope>
</reference>
<reference key="6">
    <citation type="journal article" date="1996" name="Cell">
        <title>Sec18p (NSF)-driven release of Sec17p (alpha-SNAP) can precede docking and fusion of yeast vacuoles.</title>
        <authorList>
            <person name="Mayer A."/>
            <person name="Wickner W."/>
            <person name="Haas A."/>
        </authorList>
    </citation>
    <scope>FUNCTION</scope>
</reference>
<reference key="7">
    <citation type="journal article" date="1996" name="EMBO J.">
        <title>Homotypic vacuole fusion requires Sec17p (yeast alpha-SNAP) and Sec18p (yeast NSF).</title>
        <authorList>
            <person name="Haas A."/>
            <person name="Wickner W."/>
        </authorList>
    </citation>
    <scope>FUNCTION</scope>
</reference>
<reference key="8">
    <citation type="journal article" date="1997" name="Nature">
        <title>Homotypic vacuolar fusion mediated by t- and v-SNAREs.</title>
        <authorList>
            <person name="Nichols B.J."/>
            <person name="Ungermann C."/>
            <person name="Pelham H.R.B."/>
            <person name="Wickner W.T."/>
            <person name="Haas A."/>
        </authorList>
    </citation>
    <scope>FUNCTION</scope>
</reference>
<reference key="9">
    <citation type="journal article" date="2005" name="EMBO J.">
        <title>Sec17p and HOPS, in distinct SNARE complexes, mediate SNARE complex disruption or assembly for fusion.</title>
        <authorList>
            <person name="Collins K.M."/>
            <person name="Thorngren N.L."/>
            <person name="Fratti R.A."/>
            <person name="Wickner W.T."/>
        </authorList>
    </citation>
    <scope>FUNCTION</scope>
    <scope>INTERACTION WITH CIS-SNARE COMPLEX</scope>
</reference>
<reference key="10">
    <citation type="journal article" date="2012" name="Proc. Natl. Acad. Sci. U.S.A.">
        <title>N-terminal acetylome analyses and functional insights of the N-terminal acetyltransferase NatB.</title>
        <authorList>
            <person name="Van Damme P."/>
            <person name="Lasa M."/>
            <person name="Polevoda B."/>
            <person name="Gazquez C."/>
            <person name="Elosegui-Artola A."/>
            <person name="Kim D.S."/>
            <person name="De Juan-Pardo E."/>
            <person name="Demeyer K."/>
            <person name="Hole K."/>
            <person name="Larrea E."/>
            <person name="Timmerman E."/>
            <person name="Prieto J."/>
            <person name="Arnesen T."/>
            <person name="Sherman F."/>
            <person name="Gevaert K."/>
            <person name="Aldabe R."/>
        </authorList>
    </citation>
    <scope>ACETYLATION [LARGE SCALE ANALYSIS] AT SER-2</scope>
    <scope>CLEAVAGE OF INITIATOR METHIONINE [LARGE SCALE ANALYSIS]</scope>
    <scope>IDENTIFICATION BY MASS SPECTROMETRY [LARGE SCALE ANALYSIS]</scope>
</reference>
<reference key="11">
    <citation type="journal article" date="2012" name="Proteomics">
        <title>Sites of ubiquitin attachment in Saccharomyces cerevisiae.</title>
        <authorList>
            <person name="Starita L.M."/>
            <person name="Lo R.S."/>
            <person name="Eng J.K."/>
            <person name="von Haller P.D."/>
            <person name="Fields S."/>
        </authorList>
    </citation>
    <scope>UBIQUITINATION [LARGE SCALE ANALYSIS] AT LYS-261</scope>
    <scope>IDENTIFICATION BY MASS SPECTROMETRY [LARGE SCALE ANALYSIS]</scope>
</reference>
<reference key="12">
    <citation type="journal article" date="1999" name="Mol. Cell">
        <title>Crystal structure of the vesicular transport protein Sec17: implications for SNAP function in SNARE complex disassembly.</title>
        <authorList>
            <person name="Rice L.M."/>
            <person name="Brunger A.T."/>
        </authorList>
    </citation>
    <scope>X-RAY CRYSTALLOGRAPHY (2.9 ANGSTROMS) OF 1-292</scope>
</reference>
<evidence type="ECO:0000269" key="1">
    <source>
    </source>
</evidence>
<evidence type="ECO:0000269" key="2">
    <source>
    </source>
</evidence>
<evidence type="ECO:0000269" key="3">
    <source>
    </source>
</evidence>
<evidence type="ECO:0000269" key="4">
    <source>
    </source>
</evidence>
<evidence type="ECO:0000269" key="5">
    <source ref="5"/>
</evidence>
<evidence type="ECO:0000305" key="6"/>
<evidence type="ECO:0007744" key="7">
    <source>
    </source>
</evidence>
<evidence type="ECO:0007744" key="8">
    <source>
    </source>
</evidence>
<evidence type="ECO:0007829" key="9">
    <source>
        <dbReference type="PDB" id="1QQE"/>
    </source>
</evidence>
<sequence>MSDPVELLKRAEKKGVPSSGFMKLFSGSDSYKFEEAADLCVQAATIYRLRKELNLAGDSFLKAADYQKKAGNEDEAGNTYVEAYKCFKSGGNSVNAVDSLENAIQIFTHRGQFRRGANFKFELGEILENDLHDYAKAIDCYELAGEWYAQDQSVALSNKCFIKCADLKALDGQYIEASDIYSKLIKSSMGNRLSQWSLKDYFLKKGLCQLAATDAVAAARTLQEGQSEDPNFADSRESNFLKSLIDAVNEGDSEQLSEHCKEFDNFMRLDKWKITILNKIKESIQQQEDDLL</sequence>
<keyword id="KW-0002">3D-structure</keyword>
<keyword id="KW-0007">Acetylation</keyword>
<keyword id="KW-0903">Direct protein sequencing</keyword>
<keyword id="KW-0931">ER-Golgi transport</keyword>
<keyword id="KW-1017">Isopeptide bond</keyword>
<keyword id="KW-0472">Membrane</keyword>
<keyword id="KW-0653">Protein transport</keyword>
<keyword id="KW-1185">Reference proteome</keyword>
<keyword id="KW-0813">Transport</keyword>
<keyword id="KW-0832">Ubl conjugation</keyword>
<proteinExistence type="evidence at protein level"/>
<dbReference type="EMBL" id="M93104">
    <property type="protein sequence ID" value="AAA35029.1"/>
    <property type="molecule type" value="Genomic_DNA"/>
</dbReference>
<dbReference type="EMBL" id="Z23261">
    <property type="protein sequence ID" value="CAA80796.1"/>
    <property type="molecule type" value="Genomic_DNA"/>
</dbReference>
<dbReference type="EMBL" id="Z35811">
    <property type="protein sequence ID" value="CAA84870.1"/>
    <property type="molecule type" value="Genomic_DNA"/>
</dbReference>
<dbReference type="EMBL" id="BK006936">
    <property type="protein sequence ID" value="DAA07069.1"/>
    <property type="molecule type" value="Genomic_DNA"/>
</dbReference>
<dbReference type="PIR" id="S39837">
    <property type="entry name" value="S39837"/>
</dbReference>
<dbReference type="RefSeq" id="NP_009503.1">
    <property type="nucleotide sequence ID" value="NM_001178290.1"/>
</dbReference>
<dbReference type="PDB" id="1QQE">
    <property type="method" value="X-ray"/>
    <property type="resolution" value="2.90 A"/>
    <property type="chains" value="A=1-292"/>
</dbReference>
<dbReference type="PDBsum" id="1QQE"/>
<dbReference type="SMR" id="P32602"/>
<dbReference type="BioGRID" id="32648">
    <property type="interactions" value="422"/>
</dbReference>
<dbReference type="DIP" id="DIP-2496N"/>
<dbReference type="FunCoup" id="P32602">
    <property type="interactions" value="1073"/>
</dbReference>
<dbReference type="IntAct" id="P32602">
    <property type="interactions" value="49"/>
</dbReference>
<dbReference type="MINT" id="P32602"/>
<dbReference type="STRING" id="4932.YBL050W"/>
<dbReference type="TCDB" id="1.F.1.1.2">
    <property type="family name" value="the synaptosomal vesicle fusion pore (svf-pore) family"/>
</dbReference>
<dbReference type="iPTMnet" id="P32602"/>
<dbReference type="PaxDb" id="4932-YBL050W"/>
<dbReference type="PeptideAtlas" id="P32602"/>
<dbReference type="EnsemblFungi" id="YBL050W_mRNA">
    <property type="protein sequence ID" value="YBL050W"/>
    <property type="gene ID" value="YBL050W"/>
</dbReference>
<dbReference type="GeneID" id="852230"/>
<dbReference type="KEGG" id="sce:YBL050W"/>
<dbReference type="AGR" id="SGD:S000000146"/>
<dbReference type="SGD" id="S000000146">
    <property type="gene designation" value="SEC17"/>
</dbReference>
<dbReference type="VEuPathDB" id="FungiDB:YBL050W"/>
<dbReference type="eggNOG" id="KOG1586">
    <property type="taxonomic scope" value="Eukaryota"/>
</dbReference>
<dbReference type="GeneTree" id="ENSGT00390000005826"/>
<dbReference type="HOGENOM" id="CLU_046329_0_2_1"/>
<dbReference type="InParanoid" id="P32602"/>
<dbReference type="OMA" id="WSVKEYL"/>
<dbReference type="OrthoDB" id="9984275at2759"/>
<dbReference type="BioCyc" id="YEAST:G3O-28949-MONOMER"/>
<dbReference type="Reactome" id="R-SCE-204005">
    <property type="pathway name" value="COPII-mediated vesicle transport"/>
</dbReference>
<dbReference type="Reactome" id="R-SCE-6807878">
    <property type="pathway name" value="COPI-mediated anterograde transport"/>
</dbReference>
<dbReference type="Reactome" id="R-SCE-6811434">
    <property type="pathway name" value="COPI-dependent Golgi-to-ER retrograde traffic"/>
</dbReference>
<dbReference type="Reactome" id="R-SCE-6811438">
    <property type="pathway name" value="Intra-Golgi traffic"/>
</dbReference>
<dbReference type="Reactome" id="R-SCE-6811440">
    <property type="pathway name" value="Retrograde transport at the Trans-Golgi-Network"/>
</dbReference>
<dbReference type="BioGRID-ORCS" id="852230">
    <property type="hits" value="1 hit in 10 CRISPR screens"/>
</dbReference>
<dbReference type="EvolutionaryTrace" id="P32602"/>
<dbReference type="PRO" id="PR:P32602"/>
<dbReference type="Proteomes" id="UP000002311">
    <property type="component" value="Chromosome II"/>
</dbReference>
<dbReference type="RNAct" id="P32602">
    <property type="molecule type" value="protein"/>
</dbReference>
<dbReference type="GO" id="GO:0005829">
    <property type="term" value="C:cytosol"/>
    <property type="evidence" value="ECO:0000314"/>
    <property type="project" value="SGD"/>
</dbReference>
<dbReference type="GO" id="GO:0000329">
    <property type="term" value="C:fungal-type vacuole membrane"/>
    <property type="evidence" value="ECO:0007005"/>
    <property type="project" value="SGD"/>
</dbReference>
<dbReference type="GO" id="GO:0031201">
    <property type="term" value="C:SNARE complex"/>
    <property type="evidence" value="ECO:0000353"/>
    <property type="project" value="SGD"/>
</dbReference>
<dbReference type="GO" id="GO:0001671">
    <property type="term" value="F:ATPase activator activity"/>
    <property type="evidence" value="ECO:0000314"/>
    <property type="project" value="SGD"/>
</dbReference>
<dbReference type="GO" id="GO:0005483">
    <property type="term" value="F:soluble NSF attachment protein activity"/>
    <property type="evidence" value="ECO:0000314"/>
    <property type="project" value="SGD"/>
</dbReference>
<dbReference type="GO" id="GO:0019905">
    <property type="term" value="F:syntaxin binding"/>
    <property type="evidence" value="ECO:0000318"/>
    <property type="project" value="GO_Central"/>
</dbReference>
<dbReference type="GO" id="GO:0006914">
    <property type="term" value="P:autophagy"/>
    <property type="evidence" value="ECO:0000315"/>
    <property type="project" value="SGD"/>
</dbReference>
<dbReference type="GO" id="GO:0006886">
    <property type="term" value="P:intracellular protein transport"/>
    <property type="evidence" value="ECO:0000318"/>
    <property type="project" value="GO_Central"/>
</dbReference>
<dbReference type="GO" id="GO:0035494">
    <property type="term" value="P:SNARE complex disassembly"/>
    <property type="evidence" value="ECO:0000314"/>
    <property type="project" value="SGD"/>
</dbReference>
<dbReference type="GO" id="GO:0042144">
    <property type="term" value="P:vacuole fusion, non-autophagic"/>
    <property type="evidence" value="ECO:0000314"/>
    <property type="project" value="SGD"/>
</dbReference>
<dbReference type="GO" id="GO:0048280">
    <property type="term" value="P:vesicle fusion with Golgi apparatus"/>
    <property type="evidence" value="ECO:0000314"/>
    <property type="project" value="SGD"/>
</dbReference>
<dbReference type="CDD" id="cd15832">
    <property type="entry name" value="SNAP"/>
    <property type="match status" value="1"/>
</dbReference>
<dbReference type="FunFam" id="1.25.40.10:FF:000049">
    <property type="entry name" value="Alpha-soluble NSF attachment protein-like"/>
    <property type="match status" value="1"/>
</dbReference>
<dbReference type="Gene3D" id="1.25.40.10">
    <property type="entry name" value="Tetratricopeptide repeat domain"/>
    <property type="match status" value="1"/>
</dbReference>
<dbReference type="InterPro" id="IPR000744">
    <property type="entry name" value="NSF_attach"/>
</dbReference>
<dbReference type="InterPro" id="IPR011990">
    <property type="entry name" value="TPR-like_helical_dom_sf"/>
</dbReference>
<dbReference type="PANTHER" id="PTHR13768:SF8">
    <property type="entry name" value="ALPHA-SOLUBLE NSF ATTACHMENT PROTEIN"/>
    <property type="match status" value="1"/>
</dbReference>
<dbReference type="PANTHER" id="PTHR13768">
    <property type="entry name" value="SOLUBLE NSF ATTACHMENT PROTEIN SNAP"/>
    <property type="match status" value="1"/>
</dbReference>
<dbReference type="Pfam" id="PF14938">
    <property type="entry name" value="SNAP"/>
    <property type="match status" value="1"/>
</dbReference>
<dbReference type="PRINTS" id="PR00448">
    <property type="entry name" value="NSFATTACHMNT"/>
</dbReference>
<dbReference type="SUPFAM" id="SSF48452">
    <property type="entry name" value="TPR-like"/>
    <property type="match status" value="1"/>
</dbReference>
<accession>P32602</accession>
<accession>D6VPU9</accession>
<organism>
    <name type="scientific">Saccharomyces cerevisiae (strain ATCC 204508 / S288c)</name>
    <name type="common">Baker's yeast</name>
    <dbReference type="NCBI Taxonomy" id="559292"/>
    <lineage>
        <taxon>Eukaryota</taxon>
        <taxon>Fungi</taxon>
        <taxon>Dikarya</taxon>
        <taxon>Ascomycota</taxon>
        <taxon>Saccharomycotina</taxon>
        <taxon>Saccharomycetes</taxon>
        <taxon>Saccharomycetales</taxon>
        <taxon>Saccharomycetaceae</taxon>
        <taxon>Saccharomyces</taxon>
    </lineage>
</organism>
<comment type="function">
    <text evidence="1 2 3 4">SNARE complex protein that binds to cis-SNARE complexes on membranes and is required for vesicular transport between the endoplasmic reticulum and the Golgi apparatus and for homotypic vacuole fusion. During the priming step of membrane fusion, is released from cis-SNARE complexes by SEC18 to establish a pool of unpaired SNAREs, which are required for interactions in trans during docking and fusion steps. Can displace HOPS from SNARE complexes, which may be a prerequisite for trans-SNARE complex disassembly and subsequent rounds of priming, docking and fusion.</text>
</comment>
<comment type="subunit">
    <text evidence="1">Binds to vacuolar cis-SNARE complexes composed of the v-SNAREs NYV1, VTI1 and YKT6, and the t-SNAREs VAM3 and VAM7. Interacts with SEC18.</text>
</comment>
<comment type="interaction">
    <interactant intactId="EBI-16558">
        <id>P32602</id>
    </interactant>
    <interactant intactId="EBI-38705">
        <id>Q03322</id>
        <label>TLG1</label>
    </interactant>
    <organismsDiffer>false</organismsDiffer>
    <experiments>3</experiments>
</comment>
<comment type="interaction">
    <interactant intactId="EBI-16558">
        <id>P32602</id>
    </interactant>
    <interactant intactId="EBI-19302">
        <id>Q08144</id>
        <label>TLG2</label>
    </interactant>
    <organismsDiffer>false</organismsDiffer>
    <experiments>2</experiments>
</comment>
<comment type="subcellular location">
    <subcellularLocation>
        <location>Membrane</location>
        <topology>Peripheral membrane protein</topology>
    </subcellularLocation>
</comment>
<comment type="similarity">
    <text evidence="6">Belongs to the SNAP family.</text>
</comment>
<gene>
    <name type="primary">SEC17</name>
    <name type="ordered locus">YBL050W</name>
    <name type="ORF">YBL0505</name>
    <name type="ORF">YBL0517</name>
</gene>
<name>SEC17_YEAST</name>
<protein>
    <recommendedName>
        <fullName>Alpha-soluble NSF attachment protein</fullName>
        <shortName>SNAP-alpha</shortName>
    </recommendedName>
    <alternativeName>
        <fullName>N-ethylmaleimide-sensitive factor attachment protein alpha</fullName>
    </alternativeName>
    <alternativeName>
        <fullName>Vesicular-fusion protein SEC17</fullName>
    </alternativeName>
    <alternativeName>
        <fullName>alpha-SNAP chaperone</fullName>
    </alternativeName>
</protein>
<feature type="initiator methionine" description="Removed" evidence="5 8">
    <location>
        <position position="1"/>
    </location>
</feature>
<feature type="chain" id="PRO_0000219076" description="Alpha-soluble NSF attachment protein">
    <location>
        <begin position="2"/>
        <end position="292"/>
    </location>
</feature>
<feature type="modified residue" description="N-acetylserine" evidence="5 8">
    <location>
        <position position="2"/>
    </location>
</feature>
<feature type="cross-link" description="Glycyl lysine isopeptide (Lys-Gly) (interchain with G-Cter in ubiquitin)" evidence="7">
    <location>
        <position position="261"/>
    </location>
</feature>
<feature type="sequence conflict" description="In Ref. 1; AAA35029." evidence="6" ref="1">
    <original>A</original>
    <variation>P</variation>
    <location>
        <position position="103"/>
    </location>
</feature>
<feature type="sequence conflict" description="In Ref. 1; AAA35029." evidence="6" ref="1">
    <location>
        <position position="219"/>
    </location>
</feature>
<feature type="helix" evidence="9">
    <location>
        <begin position="4"/>
        <end position="14"/>
    </location>
</feature>
<feature type="helix" evidence="9">
    <location>
        <begin position="21"/>
        <end position="25"/>
    </location>
</feature>
<feature type="helix" evidence="9">
    <location>
        <begin position="30"/>
        <end position="49"/>
    </location>
</feature>
<feature type="helix" evidence="9">
    <location>
        <begin position="54"/>
        <end position="69"/>
    </location>
</feature>
<feature type="helix" evidence="9">
    <location>
        <begin position="73"/>
        <end position="89"/>
    </location>
</feature>
<feature type="helix" evidence="9">
    <location>
        <begin position="93"/>
        <end position="109"/>
    </location>
</feature>
<feature type="helix" evidence="9">
    <location>
        <begin position="113"/>
        <end position="129"/>
    </location>
</feature>
<feature type="helix" evidence="9">
    <location>
        <begin position="134"/>
        <end position="150"/>
    </location>
</feature>
<feature type="helix" evidence="9">
    <location>
        <begin position="154"/>
        <end position="170"/>
    </location>
</feature>
<feature type="helix" evidence="9">
    <location>
        <begin position="174"/>
        <end position="186"/>
    </location>
</feature>
<feature type="turn" evidence="9">
    <location>
        <begin position="192"/>
        <end position="194"/>
    </location>
</feature>
<feature type="helix" evidence="9">
    <location>
        <begin position="195"/>
        <end position="197"/>
    </location>
</feature>
<feature type="helix" evidence="9">
    <location>
        <begin position="198"/>
        <end position="211"/>
    </location>
</feature>
<feature type="helix" evidence="9">
    <location>
        <begin position="215"/>
        <end position="223"/>
    </location>
</feature>
<feature type="helix" evidence="9">
    <location>
        <begin position="224"/>
        <end position="226"/>
    </location>
</feature>
<feature type="helix" evidence="9">
    <location>
        <begin position="238"/>
        <end position="249"/>
    </location>
</feature>
<feature type="turn" evidence="9">
    <location>
        <begin position="253"/>
        <end position="255"/>
    </location>
</feature>
<feature type="helix" evidence="9">
    <location>
        <begin position="256"/>
        <end position="263"/>
    </location>
</feature>
<feature type="helix" evidence="9">
    <location>
        <begin position="271"/>
        <end position="288"/>
    </location>
</feature>